<protein>
    <recommendedName>
        <fullName evidence="3">Probable cinnamyl alcohol dehydrogenase 9</fullName>
        <shortName evidence="2">OsCAD9</shortName>
        <ecNumber evidence="1">1.1.1.195</ecNumber>
    </recommendedName>
</protein>
<reference key="1">
    <citation type="journal article" date="2005" name="Genome Res.">
        <title>Sequence, annotation, and analysis of synteny between rice chromosome 3 and diverged grass species.</title>
        <authorList>
            <consortium name="The rice chromosome 3 sequencing consortium"/>
            <person name="Buell C.R."/>
            <person name="Yuan Q."/>
            <person name="Ouyang S."/>
            <person name="Liu J."/>
            <person name="Zhu W."/>
            <person name="Wang A."/>
            <person name="Maiti R."/>
            <person name="Haas B."/>
            <person name="Wortman J."/>
            <person name="Pertea M."/>
            <person name="Jones K.M."/>
            <person name="Kim M."/>
            <person name="Overton L."/>
            <person name="Tsitrin T."/>
            <person name="Fadrosh D."/>
            <person name="Bera J."/>
            <person name="Weaver B."/>
            <person name="Jin S."/>
            <person name="Johri S."/>
            <person name="Reardon M."/>
            <person name="Webb K."/>
            <person name="Hill J."/>
            <person name="Moffat K."/>
            <person name="Tallon L."/>
            <person name="Van Aken S."/>
            <person name="Lewis M."/>
            <person name="Utterback T."/>
            <person name="Feldblyum T."/>
            <person name="Zismann V."/>
            <person name="Iobst S."/>
            <person name="Hsiao J."/>
            <person name="de Vazeille A.R."/>
            <person name="Salzberg S.L."/>
            <person name="White O."/>
            <person name="Fraser C.M."/>
            <person name="Yu Y."/>
            <person name="Kim H."/>
            <person name="Rambo T."/>
            <person name="Currie J."/>
            <person name="Collura K."/>
            <person name="Kernodle-Thompson S."/>
            <person name="Wei F."/>
            <person name="Kudrna K."/>
            <person name="Ammiraju J.S.S."/>
            <person name="Luo M."/>
            <person name="Goicoechea J.L."/>
            <person name="Wing R.A."/>
            <person name="Henry D."/>
            <person name="Oates R."/>
            <person name="Palmer M."/>
            <person name="Pries G."/>
            <person name="Saski C."/>
            <person name="Simmons J."/>
            <person name="Soderlund C."/>
            <person name="Nelson W."/>
            <person name="de la Bastide M."/>
            <person name="Spiegel L."/>
            <person name="Nascimento L."/>
            <person name="Huang E."/>
            <person name="Preston R."/>
            <person name="Zutavern T."/>
            <person name="Palmer L."/>
            <person name="O'Shaughnessy A."/>
            <person name="Dike S."/>
            <person name="McCombie W.R."/>
            <person name="Minx P."/>
            <person name="Cordum H."/>
            <person name="Wilson R."/>
            <person name="Jin W."/>
            <person name="Lee H.R."/>
            <person name="Jiang J."/>
            <person name="Jackson S."/>
        </authorList>
    </citation>
    <scope>NUCLEOTIDE SEQUENCE [LARGE SCALE GENOMIC DNA]</scope>
    <source>
        <strain>cv. Nipponbare</strain>
    </source>
</reference>
<reference key="2">
    <citation type="journal article" date="2005" name="Nature">
        <title>The map-based sequence of the rice genome.</title>
        <authorList>
            <consortium name="International rice genome sequencing project (IRGSP)"/>
        </authorList>
    </citation>
    <scope>NUCLEOTIDE SEQUENCE [LARGE SCALE GENOMIC DNA]</scope>
    <source>
        <strain>cv. Nipponbare</strain>
    </source>
</reference>
<reference key="3">
    <citation type="journal article" date="2008" name="Nucleic Acids Res.">
        <title>The rice annotation project database (RAP-DB): 2008 update.</title>
        <authorList>
            <consortium name="The rice annotation project (RAP)"/>
        </authorList>
    </citation>
    <scope>GENOME REANNOTATION</scope>
    <source>
        <strain>cv. Nipponbare</strain>
    </source>
</reference>
<reference key="4">
    <citation type="journal article" date="2013" name="Rice">
        <title>Improvement of the Oryza sativa Nipponbare reference genome using next generation sequence and optical map data.</title>
        <authorList>
            <person name="Kawahara Y."/>
            <person name="de la Bastide M."/>
            <person name="Hamilton J.P."/>
            <person name="Kanamori H."/>
            <person name="McCombie W.R."/>
            <person name="Ouyang S."/>
            <person name="Schwartz D.C."/>
            <person name="Tanaka T."/>
            <person name="Wu J."/>
            <person name="Zhou S."/>
            <person name="Childs K.L."/>
            <person name="Davidson R.M."/>
            <person name="Lin H."/>
            <person name="Quesada-Ocampo L."/>
            <person name="Vaillancourt B."/>
            <person name="Sakai H."/>
            <person name="Lee S.S."/>
            <person name="Kim J."/>
            <person name="Numa H."/>
            <person name="Itoh T."/>
            <person name="Buell C.R."/>
            <person name="Matsumoto T."/>
        </authorList>
    </citation>
    <scope>GENOME REANNOTATION</scope>
    <source>
        <strain>cv. Nipponbare</strain>
    </source>
</reference>
<reference key="5">
    <citation type="journal article" date="2005" name="Planta">
        <title>Structure of the cinnamyl-alcohol dehydrogenase gene family in rice and promoter activity of a member associated with lignification.</title>
        <authorList>
            <person name="Tobias C.M."/>
            <person name="Chow E.K."/>
        </authorList>
    </citation>
    <scope>GENE FAMILY</scope>
    <scope>NOMENCLATURE</scope>
</reference>
<keyword id="KW-0438">Lignin biosynthesis</keyword>
<keyword id="KW-0479">Metal-binding</keyword>
<keyword id="KW-0521">NADP</keyword>
<keyword id="KW-0560">Oxidoreductase</keyword>
<keyword id="KW-1185">Reference proteome</keyword>
<keyword id="KW-0862">Zinc</keyword>
<comment type="function">
    <text evidence="1">Involved in lignin biosynthesis. Catalyzes the final step specific for the production of lignin monomers. Catalyzes the NADPH-dependent reduction of coniferaldehyde, 5-hydroxyconiferaldehyde, sinapaldehyde, 4-coumaraldehyde and caffeyl aldehyde to their respective alcohols.</text>
</comment>
<comment type="catalytic activity">
    <reaction evidence="1">
        <text>(E)-cinnamyl alcohol + NADP(+) = (E)-cinnamaldehyde + NADPH + H(+)</text>
        <dbReference type="Rhea" id="RHEA:10392"/>
        <dbReference type="ChEBI" id="CHEBI:15378"/>
        <dbReference type="ChEBI" id="CHEBI:16731"/>
        <dbReference type="ChEBI" id="CHEBI:33227"/>
        <dbReference type="ChEBI" id="CHEBI:57783"/>
        <dbReference type="ChEBI" id="CHEBI:58349"/>
        <dbReference type="EC" id="1.1.1.195"/>
    </reaction>
    <physiologicalReaction direction="right-to-left" evidence="1">
        <dbReference type="Rhea" id="RHEA:10394"/>
    </physiologicalReaction>
</comment>
<comment type="catalytic activity">
    <reaction evidence="1">
        <text>(E)-coniferol + NADP(+) = (E)-coniferaldehyde + NADPH + H(+)</text>
        <dbReference type="Rhea" id="RHEA:22444"/>
        <dbReference type="ChEBI" id="CHEBI:15378"/>
        <dbReference type="ChEBI" id="CHEBI:16547"/>
        <dbReference type="ChEBI" id="CHEBI:17745"/>
        <dbReference type="ChEBI" id="CHEBI:57783"/>
        <dbReference type="ChEBI" id="CHEBI:58349"/>
        <dbReference type="EC" id="1.1.1.195"/>
    </reaction>
    <physiologicalReaction direction="right-to-left" evidence="1">
        <dbReference type="Rhea" id="RHEA:22446"/>
    </physiologicalReaction>
</comment>
<comment type="catalytic activity">
    <reaction evidence="1">
        <text>(E)-sinapyl alcohol + NADP(+) = (E)-sinapaldehyde + NADPH + H(+)</text>
        <dbReference type="Rhea" id="RHEA:45704"/>
        <dbReference type="ChEBI" id="CHEBI:15378"/>
        <dbReference type="ChEBI" id="CHEBI:27949"/>
        <dbReference type="ChEBI" id="CHEBI:57783"/>
        <dbReference type="ChEBI" id="CHEBI:58349"/>
        <dbReference type="ChEBI" id="CHEBI:64557"/>
        <dbReference type="EC" id="1.1.1.195"/>
    </reaction>
    <physiologicalReaction direction="right-to-left" evidence="1">
        <dbReference type="Rhea" id="RHEA:45706"/>
    </physiologicalReaction>
</comment>
<comment type="catalytic activity">
    <reaction evidence="1">
        <text>(E)-4-coumaroyl alcohol + NADP(+) = (E)-4-coumaraldehyde + NADPH + H(+)</text>
        <dbReference type="Rhea" id="RHEA:45724"/>
        <dbReference type="ChEBI" id="CHEBI:15378"/>
        <dbReference type="ChEBI" id="CHEBI:28353"/>
        <dbReference type="ChEBI" id="CHEBI:57783"/>
        <dbReference type="ChEBI" id="CHEBI:58349"/>
        <dbReference type="ChEBI" id="CHEBI:64555"/>
        <dbReference type="EC" id="1.1.1.195"/>
    </reaction>
    <physiologicalReaction direction="right-to-left" evidence="1">
        <dbReference type="Rhea" id="RHEA:45726"/>
    </physiologicalReaction>
</comment>
<comment type="catalytic activity">
    <reaction evidence="1">
        <text>(E)-caffeyl alcohol + NADP(+) = (E)-caffeyl aldehyde + NADPH + H(+)</text>
        <dbReference type="Rhea" id="RHEA:45728"/>
        <dbReference type="ChEBI" id="CHEBI:15378"/>
        <dbReference type="ChEBI" id="CHEBI:28323"/>
        <dbReference type="ChEBI" id="CHEBI:31334"/>
        <dbReference type="ChEBI" id="CHEBI:57783"/>
        <dbReference type="ChEBI" id="CHEBI:58349"/>
    </reaction>
    <physiologicalReaction direction="right-to-left" evidence="1">
        <dbReference type="Rhea" id="RHEA:45730"/>
    </physiologicalReaction>
</comment>
<comment type="cofactor">
    <cofactor evidence="1">
        <name>Zn(2+)</name>
        <dbReference type="ChEBI" id="CHEBI:29105"/>
    </cofactor>
    <text evidence="1">Binds 2 Zn(2+) ions per subunit.</text>
</comment>
<comment type="pathway">
    <text evidence="1">Aromatic compound metabolism; phenylpropanoid biosynthesis.</text>
</comment>
<comment type="subunit">
    <text evidence="1">Homodimer.</text>
</comment>
<comment type="similarity">
    <text evidence="3">Belongs to the zinc-containing alcohol dehydrogenase family.</text>
</comment>
<comment type="sequence caution" evidence="3">
    <conflict type="erroneous gene model prediction">
        <sequence resource="EMBL-CDS" id="AAN05338"/>
    </conflict>
</comment>
<comment type="sequence caution" evidence="3">
    <conflict type="erroneous gene model prediction">
        <sequence resource="EMBL-CDS" id="BAH92048"/>
    </conflict>
</comment>
<comment type="sequence caution" evidence="3">
    <conflict type="erroneous initiation">
        <sequence resource="EMBL-CDS" id="BAS83035"/>
    </conflict>
    <text>Extended N-terminus.</text>
</comment>
<organism>
    <name type="scientific">Oryza sativa subsp. japonica</name>
    <name type="common">Rice</name>
    <dbReference type="NCBI Taxonomy" id="39947"/>
    <lineage>
        <taxon>Eukaryota</taxon>
        <taxon>Viridiplantae</taxon>
        <taxon>Streptophyta</taxon>
        <taxon>Embryophyta</taxon>
        <taxon>Tracheophyta</taxon>
        <taxon>Spermatophyta</taxon>
        <taxon>Magnoliopsida</taxon>
        <taxon>Liliopsida</taxon>
        <taxon>Poales</taxon>
        <taxon>Poaceae</taxon>
        <taxon>BOP clade</taxon>
        <taxon>Oryzoideae</taxon>
        <taxon>Oryzeae</taxon>
        <taxon>Oryzinae</taxon>
        <taxon>Oryza</taxon>
        <taxon>Oryza sativa</taxon>
    </lineage>
</organism>
<accession>Q10PS6</accession>
<accession>A0A0P0VUY8</accession>
<accession>C7J0G0</accession>
<accession>Q8H809</accession>
<sequence length="362" mass="37888">MEQQPKMVTGWAARDANGLLSPFSYPLRAKGDEDVVVKILFCGICHSDLSTIKNEWGNAKYPVVPGHEIVGVVAEVGSSVARFAAGDTVGVGYIASTCRACANCRDGFENYCAGLVPSFNAALPDGATVHGGFSELAVVNQRYVVRIPGGGGGASPAPLDRLAPLLCAGVTVYCPMRRLGLDRPGVHLGVAGLGGLGHLAVKFGKAFGVKVTVISTSPWKEAEAVERLGADAFLLSTNAEQMKAAAGTMDGIIDTVSAVHDLTPLITLLRTHGQLVPVGSPGKPVQLALYPLQSDGKSVAGSMIGGMRDTQEMVDFAVEHGVAAEVEVIGMEDVNGAMERLQKGDVRYRFVIDVANTMARAR</sequence>
<proteinExistence type="evidence at transcript level"/>
<feature type="chain" id="PRO_0000382651" description="Probable cinnamyl alcohol dehydrogenase 9">
    <location>
        <begin position="1"/>
        <end position="362"/>
    </location>
</feature>
<feature type="binding site" evidence="1">
    <location>
        <position position="45"/>
    </location>
    <ligand>
        <name>Zn(2+)</name>
        <dbReference type="ChEBI" id="CHEBI:29105"/>
        <label>1</label>
        <note>catalytic</note>
    </ligand>
</feature>
<feature type="binding site" evidence="1">
    <location>
        <position position="47"/>
    </location>
    <ligand>
        <name>NADP(+)</name>
        <dbReference type="ChEBI" id="CHEBI:58349"/>
    </ligand>
</feature>
<feature type="binding site" evidence="1">
    <location>
        <position position="67"/>
    </location>
    <ligand>
        <name>Zn(2+)</name>
        <dbReference type="ChEBI" id="CHEBI:29105"/>
        <label>1</label>
        <note>catalytic</note>
    </ligand>
</feature>
<feature type="binding site" evidence="1">
    <location>
        <position position="68"/>
    </location>
    <ligand>
        <name>Zn(2+)</name>
        <dbReference type="ChEBI" id="CHEBI:29105"/>
        <label>1</label>
        <note>catalytic</note>
    </ligand>
</feature>
<feature type="binding site" evidence="1">
    <location>
        <position position="98"/>
    </location>
    <ligand>
        <name>Zn(2+)</name>
        <dbReference type="ChEBI" id="CHEBI:29105"/>
        <label>2</label>
    </ligand>
</feature>
<feature type="binding site" evidence="1">
    <location>
        <position position="101"/>
    </location>
    <ligand>
        <name>Zn(2+)</name>
        <dbReference type="ChEBI" id="CHEBI:29105"/>
        <label>2</label>
    </ligand>
</feature>
<feature type="binding site" evidence="1">
    <location>
        <position position="104"/>
    </location>
    <ligand>
        <name>Zn(2+)</name>
        <dbReference type="ChEBI" id="CHEBI:29105"/>
        <label>2</label>
    </ligand>
</feature>
<feature type="binding site" evidence="1">
    <location>
        <position position="112"/>
    </location>
    <ligand>
        <name>Zn(2+)</name>
        <dbReference type="ChEBI" id="CHEBI:29105"/>
        <label>2</label>
    </ligand>
</feature>
<feature type="binding site" evidence="1">
    <location>
        <position position="167"/>
    </location>
    <ligand>
        <name>Zn(2+)</name>
        <dbReference type="ChEBI" id="CHEBI:29105"/>
        <label>1</label>
        <note>catalytic</note>
    </ligand>
</feature>
<feature type="binding site" evidence="1">
    <location>
        <position position="171"/>
    </location>
    <ligand>
        <name>NADP(+)</name>
        <dbReference type="ChEBI" id="CHEBI:58349"/>
    </ligand>
</feature>
<feature type="binding site" evidence="1">
    <location>
        <begin position="192"/>
        <end position="197"/>
    </location>
    <ligand>
        <name>NADP(+)</name>
        <dbReference type="ChEBI" id="CHEBI:58349"/>
    </ligand>
</feature>
<feature type="binding site" evidence="1">
    <location>
        <begin position="215"/>
        <end position="220"/>
    </location>
    <ligand>
        <name>NADP(+)</name>
        <dbReference type="ChEBI" id="CHEBI:58349"/>
    </ligand>
</feature>
<feature type="binding site" evidence="1">
    <location>
        <position position="255"/>
    </location>
    <ligand>
        <name>NADP(+)</name>
        <dbReference type="ChEBI" id="CHEBI:58349"/>
    </ligand>
</feature>
<feature type="binding site" evidence="1">
    <location>
        <position position="279"/>
    </location>
    <ligand>
        <name>NADP(+)</name>
        <dbReference type="ChEBI" id="CHEBI:58349"/>
    </ligand>
</feature>
<feature type="binding site" evidence="1">
    <location>
        <begin position="302"/>
        <end position="304"/>
    </location>
    <ligand>
        <name>NADP(+)</name>
        <dbReference type="ChEBI" id="CHEBI:58349"/>
    </ligand>
</feature>
<gene>
    <name evidence="2" type="primary">CAD9</name>
    <name type="ordered locus">Os03g0223200</name>
    <name type="ordered locus">LOC_Os03g12270</name>
    <name type="ORF">OJ1743A09.18</name>
</gene>
<name>CADH9_ORYSJ</name>
<evidence type="ECO:0000250" key="1">
    <source>
        <dbReference type="UniProtKB" id="O49482"/>
    </source>
</evidence>
<evidence type="ECO:0000303" key="2">
    <source>
    </source>
</evidence>
<evidence type="ECO:0000305" key="3"/>
<dbReference type="EC" id="1.1.1.195" evidence="1"/>
<dbReference type="EMBL" id="AC105364">
    <property type="protein sequence ID" value="AAN05338.1"/>
    <property type="status" value="ALT_SEQ"/>
    <property type="molecule type" value="Genomic_DNA"/>
</dbReference>
<dbReference type="EMBL" id="DP000009">
    <property type="protein sequence ID" value="ABF94715.1"/>
    <property type="molecule type" value="Genomic_DNA"/>
</dbReference>
<dbReference type="EMBL" id="AP008209">
    <property type="protein sequence ID" value="BAH92048.1"/>
    <property type="status" value="ALT_SEQ"/>
    <property type="molecule type" value="Genomic_DNA"/>
</dbReference>
<dbReference type="EMBL" id="AP014959">
    <property type="protein sequence ID" value="BAS83035.1"/>
    <property type="status" value="ALT_INIT"/>
    <property type="molecule type" value="Genomic_DNA"/>
</dbReference>
<dbReference type="RefSeq" id="XP_015631678.1">
    <property type="nucleotide sequence ID" value="XM_015776192.1"/>
</dbReference>
<dbReference type="SMR" id="Q10PS6"/>
<dbReference type="FunCoup" id="Q10PS6">
    <property type="interactions" value="27"/>
</dbReference>
<dbReference type="STRING" id="39947.Q10PS6"/>
<dbReference type="PaxDb" id="39947-Q10PS6"/>
<dbReference type="KEGG" id="dosa:Os03g0223200"/>
<dbReference type="eggNOG" id="KOG0023">
    <property type="taxonomic scope" value="Eukaryota"/>
</dbReference>
<dbReference type="HOGENOM" id="CLU_026673_20_2_1"/>
<dbReference type="InParanoid" id="Q10PS6"/>
<dbReference type="OrthoDB" id="1879366at2759"/>
<dbReference type="UniPathway" id="UPA00711"/>
<dbReference type="Proteomes" id="UP000000763">
    <property type="component" value="Chromosome 3"/>
</dbReference>
<dbReference type="Proteomes" id="UP000059680">
    <property type="component" value="Chromosome 3"/>
</dbReference>
<dbReference type="GO" id="GO:0045551">
    <property type="term" value="F:cinnamyl-alcohol dehydrogenase activity"/>
    <property type="evidence" value="ECO:0000318"/>
    <property type="project" value="GO_Central"/>
</dbReference>
<dbReference type="GO" id="GO:0050268">
    <property type="term" value="F:coniferyl-alcohol dehydrogenase activity"/>
    <property type="evidence" value="ECO:0007669"/>
    <property type="project" value="RHEA"/>
</dbReference>
<dbReference type="GO" id="GO:0008270">
    <property type="term" value="F:zinc ion binding"/>
    <property type="evidence" value="ECO:0007669"/>
    <property type="project" value="InterPro"/>
</dbReference>
<dbReference type="GO" id="GO:0009809">
    <property type="term" value="P:lignin biosynthetic process"/>
    <property type="evidence" value="ECO:0000318"/>
    <property type="project" value="GO_Central"/>
</dbReference>
<dbReference type="CDD" id="cd05283">
    <property type="entry name" value="CAD1"/>
    <property type="match status" value="1"/>
</dbReference>
<dbReference type="FunFam" id="3.40.50.720:FF:000022">
    <property type="entry name" value="Cinnamyl alcohol dehydrogenase"/>
    <property type="match status" value="1"/>
</dbReference>
<dbReference type="Gene3D" id="3.90.180.10">
    <property type="entry name" value="Medium-chain alcohol dehydrogenases, catalytic domain"/>
    <property type="match status" value="1"/>
</dbReference>
<dbReference type="Gene3D" id="3.40.50.720">
    <property type="entry name" value="NAD(P)-binding Rossmann-like Domain"/>
    <property type="match status" value="1"/>
</dbReference>
<dbReference type="InterPro" id="IPR013149">
    <property type="entry name" value="ADH-like_C"/>
</dbReference>
<dbReference type="InterPro" id="IPR013154">
    <property type="entry name" value="ADH-like_N"/>
</dbReference>
<dbReference type="InterPro" id="IPR002328">
    <property type="entry name" value="ADH_Zn_CS"/>
</dbReference>
<dbReference type="InterPro" id="IPR047109">
    <property type="entry name" value="CAD-like"/>
</dbReference>
<dbReference type="InterPro" id="IPR011032">
    <property type="entry name" value="GroES-like_sf"/>
</dbReference>
<dbReference type="InterPro" id="IPR036291">
    <property type="entry name" value="NAD(P)-bd_dom_sf"/>
</dbReference>
<dbReference type="InterPro" id="IPR020843">
    <property type="entry name" value="PKS_ER"/>
</dbReference>
<dbReference type="PANTHER" id="PTHR42683">
    <property type="entry name" value="ALDEHYDE REDUCTASE"/>
    <property type="match status" value="1"/>
</dbReference>
<dbReference type="Pfam" id="PF08240">
    <property type="entry name" value="ADH_N"/>
    <property type="match status" value="1"/>
</dbReference>
<dbReference type="Pfam" id="PF00107">
    <property type="entry name" value="ADH_zinc_N"/>
    <property type="match status" value="1"/>
</dbReference>
<dbReference type="SMART" id="SM00829">
    <property type="entry name" value="PKS_ER"/>
    <property type="match status" value="1"/>
</dbReference>
<dbReference type="SUPFAM" id="SSF50129">
    <property type="entry name" value="GroES-like"/>
    <property type="match status" value="1"/>
</dbReference>
<dbReference type="SUPFAM" id="SSF51735">
    <property type="entry name" value="NAD(P)-binding Rossmann-fold domains"/>
    <property type="match status" value="1"/>
</dbReference>
<dbReference type="PROSITE" id="PS00059">
    <property type="entry name" value="ADH_ZINC"/>
    <property type="match status" value="1"/>
</dbReference>